<organism>
    <name type="scientific">Cytophaga hutchinsonii (strain ATCC 33406 / DSM 1761 / CIP 103989 / NBRC 15051 / NCIMB 9469 / D465)</name>
    <dbReference type="NCBI Taxonomy" id="269798"/>
    <lineage>
        <taxon>Bacteria</taxon>
        <taxon>Pseudomonadati</taxon>
        <taxon>Bacteroidota</taxon>
        <taxon>Cytophagia</taxon>
        <taxon>Cytophagales</taxon>
        <taxon>Cytophagaceae</taxon>
        <taxon>Cytophaga</taxon>
    </lineage>
</organism>
<gene>
    <name evidence="2" type="primary">infB</name>
    <name type="ordered locus">CHU_3422</name>
</gene>
<protein>
    <recommendedName>
        <fullName evidence="2">Translation initiation factor IF-2</fullName>
    </recommendedName>
</protein>
<keyword id="KW-0963">Cytoplasm</keyword>
<keyword id="KW-0342">GTP-binding</keyword>
<keyword id="KW-0396">Initiation factor</keyword>
<keyword id="KW-0547">Nucleotide-binding</keyword>
<keyword id="KW-0648">Protein biosynthesis</keyword>
<keyword id="KW-1185">Reference proteome</keyword>
<dbReference type="EMBL" id="CP000383">
    <property type="protein sequence ID" value="ABG60658.1"/>
    <property type="molecule type" value="Genomic_DNA"/>
</dbReference>
<dbReference type="RefSeq" id="WP_011586765.1">
    <property type="nucleotide sequence ID" value="NC_008255.1"/>
</dbReference>
<dbReference type="SMR" id="Q11PK5"/>
<dbReference type="STRING" id="269798.CHU_3422"/>
<dbReference type="KEGG" id="chu:CHU_3422"/>
<dbReference type="eggNOG" id="COG0532">
    <property type="taxonomic scope" value="Bacteria"/>
</dbReference>
<dbReference type="eggNOG" id="COG5180">
    <property type="taxonomic scope" value="Bacteria"/>
</dbReference>
<dbReference type="HOGENOM" id="CLU_006301_0_1_10"/>
<dbReference type="OrthoDB" id="9811804at2"/>
<dbReference type="Proteomes" id="UP000001822">
    <property type="component" value="Chromosome"/>
</dbReference>
<dbReference type="GO" id="GO:0005737">
    <property type="term" value="C:cytoplasm"/>
    <property type="evidence" value="ECO:0007669"/>
    <property type="project" value="UniProtKB-SubCell"/>
</dbReference>
<dbReference type="GO" id="GO:0005525">
    <property type="term" value="F:GTP binding"/>
    <property type="evidence" value="ECO:0007669"/>
    <property type="project" value="UniProtKB-KW"/>
</dbReference>
<dbReference type="GO" id="GO:0003924">
    <property type="term" value="F:GTPase activity"/>
    <property type="evidence" value="ECO:0007669"/>
    <property type="project" value="UniProtKB-UniRule"/>
</dbReference>
<dbReference type="GO" id="GO:0003743">
    <property type="term" value="F:translation initiation factor activity"/>
    <property type="evidence" value="ECO:0007669"/>
    <property type="project" value="UniProtKB-UniRule"/>
</dbReference>
<dbReference type="CDD" id="cd01887">
    <property type="entry name" value="IF2_eIF5B"/>
    <property type="match status" value="1"/>
</dbReference>
<dbReference type="CDD" id="cd03702">
    <property type="entry name" value="IF2_mtIF2_II"/>
    <property type="match status" value="1"/>
</dbReference>
<dbReference type="CDD" id="cd03692">
    <property type="entry name" value="mtIF2_IVc"/>
    <property type="match status" value="1"/>
</dbReference>
<dbReference type="FunFam" id="2.40.30.10:FF:000007">
    <property type="entry name" value="Translation initiation factor IF-2"/>
    <property type="match status" value="1"/>
</dbReference>
<dbReference type="FunFam" id="2.40.30.10:FF:000008">
    <property type="entry name" value="Translation initiation factor IF-2"/>
    <property type="match status" value="1"/>
</dbReference>
<dbReference type="FunFam" id="3.40.50.10050:FF:000001">
    <property type="entry name" value="Translation initiation factor IF-2"/>
    <property type="match status" value="1"/>
</dbReference>
<dbReference type="FunFam" id="3.40.50.300:FF:000019">
    <property type="entry name" value="Translation initiation factor IF-2"/>
    <property type="match status" value="1"/>
</dbReference>
<dbReference type="Gene3D" id="3.40.50.300">
    <property type="entry name" value="P-loop containing nucleotide triphosphate hydrolases"/>
    <property type="match status" value="1"/>
</dbReference>
<dbReference type="Gene3D" id="2.40.30.10">
    <property type="entry name" value="Translation factors"/>
    <property type="match status" value="2"/>
</dbReference>
<dbReference type="Gene3D" id="3.40.50.10050">
    <property type="entry name" value="Translation initiation factor IF- 2, domain 3"/>
    <property type="match status" value="1"/>
</dbReference>
<dbReference type="HAMAP" id="MF_00100_B">
    <property type="entry name" value="IF_2_B"/>
    <property type="match status" value="1"/>
</dbReference>
<dbReference type="InterPro" id="IPR053905">
    <property type="entry name" value="EF-G-like_DII"/>
</dbReference>
<dbReference type="InterPro" id="IPR004161">
    <property type="entry name" value="EFTu-like_2"/>
</dbReference>
<dbReference type="InterPro" id="IPR044145">
    <property type="entry name" value="IF2_II"/>
</dbReference>
<dbReference type="InterPro" id="IPR006847">
    <property type="entry name" value="IF2_N"/>
</dbReference>
<dbReference type="InterPro" id="IPR027417">
    <property type="entry name" value="P-loop_NTPase"/>
</dbReference>
<dbReference type="InterPro" id="IPR028626">
    <property type="entry name" value="Ribosomal_eS28_CS"/>
</dbReference>
<dbReference type="InterPro" id="IPR005225">
    <property type="entry name" value="Small_GTP-bd"/>
</dbReference>
<dbReference type="InterPro" id="IPR000795">
    <property type="entry name" value="T_Tr_GTP-bd_dom"/>
</dbReference>
<dbReference type="InterPro" id="IPR000178">
    <property type="entry name" value="TF_IF2_bacterial-like"/>
</dbReference>
<dbReference type="InterPro" id="IPR015760">
    <property type="entry name" value="TIF_IF2"/>
</dbReference>
<dbReference type="InterPro" id="IPR023115">
    <property type="entry name" value="TIF_IF2_dom3"/>
</dbReference>
<dbReference type="InterPro" id="IPR036925">
    <property type="entry name" value="TIF_IF2_dom3_sf"/>
</dbReference>
<dbReference type="InterPro" id="IPR009000">
    <property type="entry name" value="Transl_B-barrel_sf"/>
</dbReference>
<dbReference type="NCBIfam" id="TIGR00487">
    <property type="entry name" value="IF-2"/>
    <property type="match status" value="1"/>
</dbReference>
<dbReference type="NCBIfam" id="TIGR00231">
    <property type="entry name" value="small_GTP"/>
    <property type="match status" value="1"/>
</dbReference>
<dbReference type="PANTHER" id="PTHR43381:SF5">
    <property type="entry name" value="TR-TYPE G DOMAIN-CONTAINING PROTEIN"/>
    <property type="match status" value="1"/>
</dbReference>
<dbReference type="PANTHER" id="PTHR43381">
    <property type="entry name" value="TRANSLATION INITIATION FACTOR IF-2-RELATED"/>
    <property type="match status" value="1"/>
</dbReference>
<dbReference type="Pfam" id="PF22042">
    <property type="entry name" value="EF-G_D2"/>
    <property type="match status" value="1"/>
</dbReference>
<dbReference type="Pfam" id="PF00009">
    <property type="entry name" value="GTP_EFTU"/>
    <property type="match status" value="1"/>
</dbReference>
<dbReference type="Pfam" id="PF03144">
    <property type="entry name" value="GTP_EFTU_D2"/>
    <property type="match status" value="1"/>
</dbReference>
<dbReference type="Pfam" id="PF11987">
    <property type="entry name" value="IF-2"/>
    <property type="match status" value="1"/>
</dbReference>
<dbReference type="Pfam" id="PF04760">
    <property type="entry name" value="IF2_N"/>
    <property type="match status" value="1"/>
</dbReference>
<dbReference type="SUPFAM" id="SSF52156">
    <property type="entry name" value="Initiation factor IF2/eIF5b, domain 3"/>
    <property type="match status" value="1"/>
</dbReference>
<dbReference type="SUPFAM" id="SSF52540">
    <property type="entry name" value="P-loop containing nucleoside triphosphate hydrolases"/>
    <property type="match status" value="1"/>
</dbReference>
<dbReference type="SUPFAM" id="SSF50447">
    <property type="entry name" value="Translation proteins"/>
    <property type="match status" value="2"/>
</dbReference>
<dbReference type="PROSITE" id="PS51722">
    <property type="entry name" value="G_TR_2"/>
    <property type="match status" value="1"/>
</dbReference>
<dbReference type="PROSITE" id="PS01176">
    <property type="entry name" value="IF2"/>
    <property type="match status" value="1"/>
</dbReference>
<sequence length="1008" mass="108860">MAEEKMMRLSQVAKKLNVGTSTIIDHLSAKGYDIENNPNAKITVDMYAFLSKEYESSAQVKKEAESLTIGKKHMGDVVIDADQVNVAPEHDEEDEVRIINNSPAEAVVPEVPAVTAQEAPKTAPTAESPEDVKGNVTLQGLKVLGKIDLGTADKDSKKSAKNTKPVEKVAAEKPIEKAKPETVAPPVEPKPEPKQETPKTEQPVKKETPKAETQKPPVADKPAEKTPVVEEPAAPVADVPVQVVQAHADKLQGLTVLGKIQLPDKKKEPTRVASSDEVVDKNKNKRKRKRLNDGPNKPAGANPNGPRPAGSNPNGPRPQGTNPNGPRPQGQGGNPNGPRPAGGPNRPGVPNRPNSNGPKPTLTKASEKGEVTGKQIQDKIKATMAKLSGGGTKSGPVNRAKYRKDKRSAMADAEEERLMAEQEDAKSLKVAEFISASDLASLMDVSINEVISKCMAMGMFVSINQRLDAEAITIIADEFGYDVNFQTTGEEDDVTDVDQDDPASLIDRAPIVTIMGHVDHGKTSLLDYIRKSKVVAGEAGGITQHIGAYNVMTDSGKPITFLDTPGHEAFTAMRARGAKITDIVIIVVAADDSVMPQTKEAINHARVAGVPIIIAINKIDKPAANPDKIKEELSKENILVEDWGGKYQCQAISAKAGTGISELLDKVLLEAEMLELKANPDKRAIGAVIEASLDKGRGYVTNVLVEAGTLRIGDIILAGAHFGRVKAMVDHTGKKLKEAGPAMPLQVLGLNGAPQAGDKFQVMETEREAREISSKREQLLREQSIRTKKHITLDEIGRRLAIGNFKELNIIVKADVDGSVEALSDSLLKLSTEEIQIRILHKGVGQISESDILLASASDAIIVAFQVRPSTSARKLAEQEQIEIRMYSIIYDAINEVKDAMEGMLEPKMEEVVLGTIDVRDVFKITKVGTVAGAYVSEGIVKRNNQVRLIRDGIVMFTGTISALKRFKDDVSEVKTSYECGISLKGYNDIQIGDQIEAFEQKEVKRTL</sequence>
<proteinExistence type="inferred from homology"/>
<accession>Q11PK5</accession>
<feature type="chain" id="PRO_0000335464" description="Translation initiation factor IF-2">
    <location>
        <begin position="1"/>
        <end position="1008"/>
    </location>
</feature>
<feature type="domain" description="tr-type G">
    <location>
        <begin position="507"/>
        <end position="677"/>
    </location>
</feature>
<feature type="region of interest" description="Disordered" evidence="3">
    <location>
        <begin position="113"/>
        <end position="136"/>
    </location>
</feature>
<feature type="region of interest" description="Disordered" evidence="3">
    <location>
        <begin position="153"/>
        <end position="235"/>
    </location>
</feature>
<feature type="region of interest" description="Disordered" evidence="3">
    <location>
        <begin position="253"/>
        <end position="405"/>
    </location>
</feature>
<feature type="region of interest" description="G1" evidence="1">
    <location>
        <begin position="516"/>
        <end position="523"/>
    </location>
</feature>
<feature type="region of interest" description="G2" evidence="1">
    <location>
        <begin position="541"/>
        <end position="545"/>
    </location>
</feature>
<feature type="region of interest" description="G3" evidence="1">
    <location>
        <begin position="563"/>
        <end position="566"/>
    </location>
</feature>
<feature type="region of interest" description="G4" evidence="1">
    <location>
        <begin position="617"/>
        <end position="620"/>
    </location>
</feature>
<feature type="region of interest" description="G5" evidence="1">
    <location>
        <begin position="653"/>
        <end position="655"/>
    </location>
</feature>
<feature type="compositionally biased region" description="Basic and acidic residues" evidence="3">
    <location>
        <begin position="153"/>
        <end position="180"/>
    </location>
</feature>
<feature type="compositionally biased region" description="Basic and acidic residues" evidence="3">
    <location>
        <begin position="189"/>
        <end position="213"/>
    </location>
</feature>
<feature type="compositionally biased region" description="Low complexity" evidence="3">
    <location>
        <begin position="294"/>
        <end position="329"/>
    </location>
</feature>
<feature type="compositionally biased region" description="Low complexity" evidence="3">
    <location>
        <begin position="342"/>
        <end position="358"/>
    </location>
</feature>
<feature type="compositionally biased region" description="Basic and acidic residues" evidence="3">
    <location>
        <begin position="365"/>
        <end position="381"/>
    </location>
</feature>
<feature type="binding site" evidence="2">
    <location>
        <begin position="516"/>
        <end position="523"/>
    </location>
    <ligand>
        <name>GTP</name>
        <dbReference type="ChEBI" id="CHEBI:37565"/>
    </ligand>
</feature>
<feature type="binding site" evidence="2">
    <location>
        <begin position="563"/>
        <end position="567"/>
    </location>
    <ligand>
        <name>GTP</name>
        <dbReference type="ChEBI" id="CHEBI:37565"/>
    </ligand>
</feature>
<feature type="binding site" evidence="2">
    <location>
        <begin position="617"/>
        <end position="620"/>
    </location>
    <ligand>
        <name>GTP</name>
        <dbReference type="ChEBI" id="CHEBI:37565"/>
    </ligand>
</feature>
<evidence type="ECO:0000250" key="1"/>
<evidence type="ECO:0000255" key="2">
    <source>
        <dbReference type="HAMAP-Rule" id="MF_00100"/>
    </source>
</evidence>
<evidence type="ECO:0000256" key="3">
    <source>
        <dbReference type="SAM" id="MobiDB-lite"/>
    </source>
</evidence>
<comment type="function">
    <text evidence="2">One of the essential components for the initiation of protein synthesis. Protects formylmethionyl-tRNA from spontaneous hydrolysis and promotes its binding to the 30S ribosomal subunits. Also involved in the hydrolysis of GTP during the formation of the 70S ribosomal complex.</text>
</comment>
<comment type="subcellular location">
    <subcellularLocation>
        <location evidence="2">Cytoplasm</location>
    </subcellularLocation>
</comment>
<comment type="similarity">
    <text evidence="2">Belongs to the TRAFAC class translation factor GTPase superfamily. Classic translation factor GTPase family. IF-2 subfamily.</text>
</comment>
<reference key="1">
    <citation type="journal article" date="2007" name="Appl. Environ. Microbiol.">
        <title>Genome sequence of the cellulolytic gliding bacterium Cytophaga hutchinsonii.</title>
        <authorList>
            <person name="Xie G."/>
            <person name="Bruce D.C."/>
            <person name="Challacombe J.F."/>
            <person name="Chertkov O."/>
            <person name="Detter J.C."/>
            <person name="Gilna P."/>
            <person name="Han C.S."/>
            <person name="Lucas S."/>
            <person name="Misra M."/>
            <person name="Myers G.L."/>
            <person name="Richardson P."/>
            <person name="Tapia R."/>
            <person name="Thayer N."/>
            <person name="Thompson L.S."/>
            <person name="Brettin T.S."/>
            <person name="Henrissat B."/>
            <person name="Wilson D.B."/>
            <person name="McBride M.J."/>
        </authorList>
    </citation>
    <scope>NUCLEOTIDE SEQUENCE [LARGE SCALE GENOMIC DNA]</scope>
    <source>
        <strain>ATCC 33406 / DSM 1761 / JCM 20678 / CIP 103989 / IAM 12607 / NBRC 15051 / NCIMB 9469 / D465</strain>
    </source>
</reference>
<name>IF2_CYTH3</name>